<keyword id="KW-0028">Amino-acid biosynthesis</keyword>
<keyword id="KW-0057">Aromatic amino acid biosynthesis</keyword>
<keyword id="KW-0274">FAD</keyword>
<keyword id="KW-0285">Flavoprotein</keyword>
<keyword id="KW-0288">FMN</keyword>
<keyword id="KW-0456">Lyase</keyword>
<keyword id="KW-0521">NADP</keyword>
<protein>
    <recommendedName>
        <fullName evidence="1">Chorismate synthase</fullName>
        <shortName evidence="1">CS</shortName>
        <ecNumber evidence="1">4.2.3.5</ecNumber>
    </recommendedName>
    <alternativeName>
        <fullName evidence="1">5-enolpyruvylshikimate-3-phosphate phospholyase</fullName>
    </alternativeName>
</protein>
<organism>
    <name type="scientific">Campylobacter jejuni subsp. jejuni serotype O:6 (strain 81116 / NCTC 11828)</name>
    <dbReference type="NCBI Taxonomy" id="407148"/>
    <lineage>
        <taxon>Bacteria</taxon>
        <taxon>Pseudomonadati</taxon>
        <taxon>Campylobacterota</taxon>
        <taxon>Epsilonproteobacteria</taxon>
        <taxon>Campylobacterales</taxon>
        <taxon>Campylobacteraceae</taxon>
        <taxon>Campylobacter</taxon>
    </lineage>
</organism>
<name>AROC_CAMJ8</name>
<accession>A8FNU6</accession>
<gene>
    <name evidence="1" type="primary">aroC</name>
    <name type="ordered locus">C8J_1536</name>
</gene>
<comment type="function">
    <text evidence="1">Catalyzes the anti-1,4-elimination of the C-3 phosphate and the C-6 proR hydrogen from 5-enolpyruvylshikimate-3-phosphate (EPSP) to yield chorismate, which is the branch point compound that serves as the starting substrate for the three terminal pathways of aromatic amino acid biosynthesis. This reaction introduces a second double bond into the aromatic ring system.</text>
</comment>
<comment type="catalytic activity">
    <reaction evidence="1">
        <text>5-O-(1-carboxyvinyl)-3-phosphoshikimate = chorismate + phosphate</text>
        <dbReference type="Rhea" id="RHEA:21020"/>
        <dbReference type="ChEBI" id="CHEBI:29748"/>
        <dbReference type="ChEBI" id="CHEBI:43474"/>
        <dbReference type="ChEBI" id="CHEBI:57701"/>
        <dbReference type="EC" id="4.2.3.5"/>
    </reaction>
</comment>
<comment type="cofactor">
    <cofactor evidence="1">
        <name>FMNH2</name>
        <dbReference type="ChEBI" id="CHEBI:57618"/>
    </cofactor>
    <text evidence="1">Reduced FMN (FMNH(2)).</text>
</comment>
<comment type="pathway">
    <text evidence="1">Metabolic intermediate biosynthesis; chorismate biosynthesis; chorismate from D-erythrose 4-phosphate and phosphoenolpyruvate: step 7/7.</text>
</comment>
<comment type="subunit">
    <text evidence="1">Homotetramer.</text>
</comment>
<comment type="similarity">
    <text evidence="1">Belongs to the chorismate synthase family.</text>
</comment>
<evidence type="ECO:0000255" key="1">
    <source>
        <dbReference type="HAMAP-Rule" id="MF_00300"/>
    </source>
</evidence>
<sequence length="362" mass="39262">MNTFGTRLKFTSFGESHGVAVGCIIDGMPAGVKFDEEFLQNELDKRKGGSKFATPRKESDKAQVLSGVFEGYTTGHPIAIVVFNENAHSKDYDNLKDLFRPAHADFTYFYKYGIRDHRGGGRSSARESVARVAGGAVAAMLLREFDICVQSGVFGVGTFVSNLKEEEFDFEFAKKSEIFCLDPKLESDFKNEILNARNSKDSVGAAVFTKVSGMLVGLGEVLYDKLDSKLAHALMGINAVKAVEIGEGINASKMRGSCHNDALKDGKFLSNHSGGILGGISNGENLILKTYFKPTPSIFAKQESIDKFGNNLEFELKGRHDPCVGVRGSVVASAMVRLVLADCLLLNASANLNNLKNAYGLK</sequence>
<reference key="1">
    <citation type="journal article" date="2007" name="J. Bacteriol.">
        <title>The complete genome sequence of Campylobacter jejuni strain 81116 (NCTC11828).</title>
        <authorList>
            <person name="Pearson B.M."/>
            <person name="Gaskin D.J.H."/>
            <person name="Segers R.P.A.M."/>
            <person name="Wells J.M."/>
            <person name="Nuijten P.J.M."/>
            <person name="van Vliet A.H.M."/>
        </authorList>
    </citation>
    <scope>NUCLEOTIDE SEQUENCE [LARGE SCALE GENOMIC DNA]</scope>
    <source>
        <strain>81116 / NCTC 11828</strain>
    </source>
</reference>
<proteinExistence type="inferred from homology"/>
<dbReference type="EC" id="4.2.3.5" evidence="1"/>
<dbReference type="EMBL" id="CP000814">
    <property type="protein sequence ID" value="ABV53133.1"/>
    <property type="molecule type" value="Genomic_DNA"/>
</dbReference>
<dbReference type="RefSeq" id="WP_002866608.1">
    <property type="nucleotide sequence ID" value="NC_009839.1"/>
</dbReference>
<dbReference type="SMR" id="A8FNU6"/>
<dbReference type="KEGG" id="cju:C8J_1536"/>
<dbReference type="HOGENOM" id="CLU_034547_0_2_7"/>
<dbReference type="UniPathway" id="UPA00053">
    <property type="reaction ID" value="UER00090"/>
</dbReference>
<dbReference type="GO" id="GO:0005829">
    <property type="term" value="C:cytosol"/>
    <property type="evidence" value="ECO:0007669"/>
    <property type="project" value="TreeGrafter"/>
</dbReference>
<dbReference type="GO" id="GO:0004107">
    <property type="term" value="F:chorismate synthase activity"/>
    <property type="evidence" value="ECO:0007669"/>
    <property type="project" value="UniProtKB-UniRule"/>
</dbReference>
<dbReference type="GO" id="GO:0010181">
    <property type="term" value="F:FMN binding"/>
    <property type="evidence" value="ECO:0007669"/>
    <property type="project" value="TreeGrafter"/>
</dbReference>
<dbReference type="GO" id="GO:0008652">
    <property type="term" value="P:amino acid biosynthetic process"/>
    <property type="evidence" value="ECO:0007669"/>
    <property type="project" value="UniProtKB-KW"/>
</dbReference>
<dbReference type="GO" id="GO:0009073">
    <property type="term" value="P:aromatic amino acid family biosynthetic process"/>
    <property type="evidence" value="ECO:0007669"/>
    <property type="project" value="UniProtKB-KW"/>
</dbReference>
<dbReference type="GO" id="GO:0009423">
    <property type="term" value="P:chorismate biosynthetic process"/>
    <property type="evidence" value="ECO:0007669"/>
    <property type="project" value="UniProtKB-UniRule"/>
</dbReference>
<dbReference type="CDD" id="cd07304">
    <property type="entry name" value="Chorismate_synthase"/>
    <property type="match status" value="1"/>
</dbReference>
<dbReference type="Gene3D" id="3.60.150.10">
    <property type="entry name" value="Chorismate synthase AroC"/>
    <property type="match status" value="1"/>
</dbReference>
<dbReference type="HAMAP" id="MF_00300">
    <property type="entry name" value="Chorismate_synth"/>
    <property type="match status" value="1"/>
</dbReference>
<dbReference type="InterPro" id="IPR000453">
    <property type="entry name" value="Chorismate_synth"/>
</dbReference>
<dbReference type="InterPro" id="IPR035904">
    <property type="entry name" value="Chorismate_synth_AroC_sf"/>
</dbReference>
<dbReference type="InterPro" id="IPR020541">
    <property type="entry name" value="Chorismate_synthase_CS"/>
</dbReference>
<dbReference type="NCBIfam" id="TIGR00033">
    <property type="entry name" value="aroC"/>
    <property type="match status" value="1"/>
</dbReference>
<dbReference type="NCBIfam" id="NF003793">
    <property type="entry name" value="PRK05382.1"/>
    <property type="match status" value="1"/>
</dbReference>
<dbReference type="PANTHER" id="PTHR21085">
    <property type="entry name" value="CHORISMATE SYNTHASE"/>
    <property type="match status" value="1"/>
</dbReference>
<dbReference type="PANTHER" id="PTHR21085:SF0">
    <property type="entry name" value="CHORISMATE SYNTHASE"/>
    <property type="match status" value="1"/>
</dbReference>
<dbReference type="Pfam" id="PF01264">
    <property type="entry name" value="Chorismate_synt"/>
    <property type="match status" value="1"/>
</dbReference>
<dbReference type="PIRSF" id="PIRSF001456">
    <property type="entry name" value="Chorismate_synth"/>
    <property type="match status" value="1"/>
</dbReference>
<dbReference type="SUPFAM" id="SSF103263">
    <property type="entry name" value="Chorismate synthase, AroC"/>
    <property type="match status" value="1"/>
</dbReference>
<dbReference type="PROSITE" id="PS00787">
    <property type="entry name" value="CHORISMATE_SYNTHASE_1"/>
    <property type="match status" value="1"/>
</dbReference>
<dbReference type="PROSITE" id="PS00788">
    <property type="entry name" value="CHORISMATE_SYNTHASE_2"/>
    <property type="match status" value="1"/>
</dbReference>
<feature type="chain" id="PRO_1000071969" description="Chorismate synthase">
    <location>
        <begin position="1"/>
        <end position="362"/>
    </location>
</feature>
<feature type="binding site" evidence="1">
    <location>
        <position position="46"/>
    </location>
    <ligand>
        <name>NADP(+)</name>
        <dbReference type="ChEBI" id="CHEBI:58349"/>
    </ligand>
</feature>
<feature type="binding site" evidence="1">
    <location>
        <begin position="122"/>
        <end position="124"/>
    </location>
    <ligand>
        <name>FMN</name>
        <dbReference type="ChEBI" id="CHEBI:58210"/>
    </ligand>
</feature>
<feature type="binding site" evidence="1">
    <location>
        <begin position="238"/>
        <end position="239"/>
    </location>
    <ligand>
        <name>FMN</name>
        <dbReference type="ChEBI" id="CHEBI:58210"/>
    </ligand>
</feature>
<feature type="binding site" evidence="1">
    <location>
        <position position="278"/>
    </location>
    <ligand>
        <name>FMN</name>
        <dbReference type="ChEBI" id="CHEBI:58210"/>
    </ligand>
</feature>
<feature type="binding site" evidence="1">
    <location>
        <begin position="293"/>
        <end position="297"/>
    </location>
    <ligand>
        <name>FMN</name>
        <dbReference type="ChEBI" id="CHEBI:58210"/>
    </ligand>
</feature>
<feature type="binding site" evidence="1">
    <location>
        <position position="319"/>
    </location>
    <ligand>
        <name>FMN</name>
        <dbReference type="ChEBI" id="CHEBI:58210"/>
    </ligand>
</feature>